<comment type="function">
    <text evidence="1">Catalyzes the conversion of (8S)-3',8-cyclo-7,8-dihydroguanosine 5'-triphosphate to cyclic pyranopterin monophosphate (cPMP).</text>
</comment>
<comment type="catalytic activity">
    <reaction evidence="1">
        <text>(8S)-3',8-cyclo-7,8-dihydroguanosine 5'-triphosphate = cyclic pyranopterin phosphate + diphosphate</text>
        <dbReference type="Rhea" id="RHEA:49580"/>
        <dbReference type="ChEBI" id="CHEBI:33019"/>
        <dbReference type="ChEBI" id="CHEBI:59648"/>
        <dbReference type="ChEBI" id="CHEBI:131766"/>
        <dbReference type="EC" id="4.6.1.17"/>
    </reaction>
</comment>
<comment type="pathway">
    <text evidence="1">Cofactor biosynthesis; molybdopterin biosynthesis.</text>
</comment>
<comment type="subunit">
    <text evidence="1">Homohexamer; trimer of dimers.</text>
</comment>
<comment type="similarity">
    <text evidence="1">Belongs to the MoaC family.</text>
</comment>
<feature type="chain" id="PRO_0000097852" description="Probable cyclic pyranopterin monophosphate synthase">
    <location>
        <begin position="1"/>
        <end position="163"/>
    </location>
</feature>
<feature type="region of interest" description="Disordered" evidence="2">
    <location>
        <begin position="1"/>
        <end position="23"/>
    </location>
</feature>
<feature type="active site" evidence="1">
    <location>
        <position position="131"/>
    </location>
</feature>
<feature type="binding site" evidence="1">
    <location>
        <begin position="80"/>
        <end position="82"/>
    </location>
    <ligand>
        <name>substrate</name>
    </ligand>
</feature>
<feature type="binding site" evidence="1">
    <location>
        <begin position="116"/>
        <end position="117"/>
    </location>
    <ligand>
        <name>substrate</name>
    </ligand>
</feature>
<reference key="1">
    <citation type="journal article" date="2000" name="Proc. Natl. Acad. Sci. U.S.A.">
        <title>Genome sequence of Halobacterium species NRC-1.</title>
        <authorList>
            <person name="Ng W.V."/>
            <person name="Kennedy S.P."/>
            <person name="Mahairas G.G."/>
            <person name="Berquist B."/>
            <person name="Pan M."/>
            <person name="Shukla H.D."/>
            <person name="Lasky S.R."/>
            <person name="Baliga N.S."/>
            <person name="Thorsson V."/>
            <person name="Sbrogna J."/>
            <person name="Swartzell S."/>
            <person name="Weir D."/>
            <person name="Hall J."/>
            <person name="Dahl T.A."/>
            <person name="Welti R."/>
            <person name="Goo Y.A."/>
            <person name="Leithauser B."/>
            <person name="Keller K."/>
            <person name="Cruz R."/>
            <person name="Danson M.J."/>
            <person name="Hough D.W."/>
            <person name="Maddocks D.G."/>
            <person name="Jablonski P.E."/>
            <person name="Krebs M.P."/>
            <person name="Angevine C.M."/>
            <person name="Dale H."/>
            <person name="Isenbarger T.A."/>
            <person name="Peck R.F."/>
            <person name="Pohlschroder M."/>
            <person name="Spudich J.L."/>
            <person name="Jung K.-H."/>
            <person name="Alam M."/>
            <person name="Freitas T."/>
            <person name="Hou S."/>
            <person name="Daniels C.J."/>
            <person name="Dennis P.P."/>
            <person name="Omer A.D."/>
            <person name="Ebhardt H."/>
            <person name="Lowe T.M."/>
            <person name="Liang P."/>
            <person name="Riley M."/>
            <person name="Hood L."/>
            <person name="DasSarma S."/>
        </authorList>
    </citation>
    <scope>NUCLEOTIDE SEQUENCE [LARGE SCALE GENOMIC DNA]</scope>
    <source>
        <strain>ATCC 700922 / JCM 11081 / NRC-1</strain>
    </source>
</reference>
<proteinExistence type="inferred from homology"/>
<accession>Q9HQ89</accession>
<name>MOAC_HALSA</name>
<dbReference type="EC" id="4.6.1.17" evidence="1"/>
<dbReference type="EMBL" id="AE004437">
    <property type="protein sequence ID" value="AAG19627.1"/>
    <property type="molecule type" value="Genomic_DNA"/>
</dbReference>
<dbReference type="PIR" id="G84282">
    <property type="entry name" value="G84282"/>
</dbReference>
<dbReference type="RefSeq" id="WP_010902923.1">
    <property type="nucleotide sequence ID" value="NC_002607.1"/>
</dbReference>
<dbReference type="SMR" id="Q9HQ89"/>
<dbReference type="FunCoup" id="Q9HQ89">
    <property type="interactions" value="74"/>
</dbReference>
<dbReference type="STRING" id="64091.VNG_1273G"/>
<dbReference type="PaxDb" id="64091-VNG_1273G"/>
<dbReference type="GeneID" id="89342699"/>
<dbReference type="KEGG" id="hal:VNG_1273G"/>
<dbReference type="PATRIC" id="fig|64091.14.peg.975"/>
<dbReference type="HOGENOM" id="CLU_074693_1_2_2"/>
<dbReference type="InParanoid" id="Q9HQ89"/>
<dbReference type="OrthoDB" id="10067at2157"/>
<dbReference type="PhylomeDB" id="Q9HQ89"/>
<dbReference type="UniPathway" id="UPA00344"/>
<dbReference type="Proteomes" id="UP000000554">
    <property type="component" value="Chromosome"/>
</dbReference>
<dbReference type="GO" id="GO:0061799">
    <property type="term" value="F:cyclic pyranopterin monophosphate synthase activity"/>
    <property type="evidence" value="ECO:0007669"/>
    <property type="project" value="UniProtKB-UniRule"/>
</dbReference>
<dbReference type="GO" id="GO:0006777">
    <property type="term" value="P:Mo-molybdopterin cofactor biosynthetic process"/>
    <property type="evidence" value="ECO:0007669"/>
    <property type="project" value="UniProtKB-UniRule"/>
</dbReference>
<dbReference type="CDD" id="cd01419">
    <property type="entry name" value="MoaC_A"/>
    <property type="match status" value="1"/>
</dbReference>
<dbReference type="Gene3D" id="3.30.70.640">
    <property type="entry name" value="Molybdopterin cofactor biosynthesis C (MoaC) domain"/>
    <property type="match status" value="1"/>
</dbReference>
<dbReference type="HAMAP" id="MF_01224_A">
    <property type="entry name" value="MoaC_A"/>
    <property type="match status" value="1"/>
</dbReference>
<dbReference type="InterPro" id="IPR023047">
    <property type="entry name" value="Mo_CF_biosynth-C_arc"/>
</dbReference>
<dbReference type="InterPro" id="IPR023045">
    <property type="entry name" value="MoaC"/>
</dbReference>
<dbReference type="InterPro" id="IPR036522">
    <property type="entry name" value="MoaC_sf"/>
</dbReference>
<dbReference type="InterPro" id="IPR002820">
    <property type="entry name" value="Mopterin_CF_biosynth-C_dom"/>
</dbReference>
<dbReference type="NCBIfam" id="TIGR00581">
    <property type="entry name" value="moaC"/>
    <property type="match status" value="1"/>
</dbReference>
<dbReference type="NCBIfam" id="NF008999">
    <property type="entry name" value="PRK12343.1"/>
    <property type="match status" value="1"/>
</dbReference>
<dbReference type="Pfam" id="PF01967">
    <property type="entry name" value="MoaC"/>
    <property type="match status" value="1"/>
</dbReference>
<dbReference type="SUPFAM" id="SSF55040">
    <property type="entry name" value="Molybdenum cofactor biosynthesis protein C, MoaC"/>
    <property type="match status" value="1"/>
</dbReference>
<keyword id="KW-0456">Lyase</keyword>
<keyword id="KW-0501">Molybdenum cofactor biosynthesis</keyword>
<keyword id="KW-1185">Reference proteome</keyword>
<protein>
    <recommendedName>
        <fullName evidence="1">Probable cyclic pyranopterin monophosphate synthase</fullName>
        <ecNumber evidence="1">4.6.1.17</ecNumber>
    </recommendedName>
    <alternativeName>
        <fullName evidence="1">Molybdenum cofactor biosynthesis protein C</fullName>
    </alternativeName>
</protein>
<gene>
    <name evidence="1" type="primary">moaC</name>
    <name type="ordered locus">VNG_1273G</name>
</gene>
<sequence length="163" mass="17306">MPDGDDDALTHTTADGDAQMVDVGSKPDTARRAVASGDLHLAESTIDAVRDDGIGKGNVLATARVGAIQAVKHTWETIPMCHQIPITNVDTTFDVRDDRVVLEVAVETTGKTGCEMEALEGVTTGLNVVWDMVKAAEKDADGQYPGTAIENVGVDTKEKHHPE</sequence>
<organism>
    <name type="scientific">Halobacterium salinarum (strain ATCC 700922 / JCM 11081 / NRC-1)</name>
    <name type="common">Halobacterium halobium</name>
    <dbReference type="NCBI Taxonomy" id="64091"/>
    <lineage>
        <taxon>Archaea</taxon>
        <taxon>Methanobacteriati</taxon>
        <taxon>Methanobacteriota</taxon>
        <taxon>Stenosarchaea group</taxon>
        <taxon>Halobacteria</taxon>
        <taxon>Halobacteriales</taxon>
        <taxon>Halobacteriaceae</taxon>
        <taxon>Halobacterium</taxon>
        <taxon>Halobacterium salinarum NRC-34001</taxon>
    </lineage>
</organism>
<evidence type="ECO:0000255" key="1">
    <source>
        <dbReference type="HAMAP-Rule" id="MF_01224"/>
    </source>
</evidence>
<evidence type="ECO:0000256" key="2">
    <source>
        <dbReference type="SAM" id="MobiDB-lite"/>
    </source>
</evidence>